<name>GRCA_VIBCH</name>
<sequence length="125" mass="13910">MIQGIQITKAANDDLLNSIWLLDSEKNEARCVAALKGFEADQVVSINDLGQFESREVAIEAAPRIEGGQHLNVNVLKRETLEDAVAHPEKYPQLTIRVSGYAVRFNSLTAEQQRDVIARTFTESL</sequence>
<comment type="function">
    <text evidence="1">Acts as a radical domain for damaged PFL and possibly other radical proteins.</text>
</comment>
<feature type="chain" id="PRO_0000166711" description="Autonomous glycyl radical cofactor">
    <location>
        <begin position="1"/>
        <end position="125"/>
    </location>
</feature>
<feature type="domain" description="Glycine radical" evidence="1">
    <location>
        <begin position="5"/>
        <end position="125"/>
    </location>
</feature>
<feature type="modified residue" description="Glycine radical" evidence="1">
    <location>
        <position position="100"/>
    </location>
</feature>
<proteinExistence type="inferred from homology"/>
<dbReference type="EMBL" id="AE003852">
    <property type="protein sequence ID" value="AAF95504.1"/>
    <property type="molecule type" value="Genomic_DNA"/>
</dbReference>
<dbReference type="PIR" id="E82086">
    <property type="entry name" value="E82086"/>
</dbReference>
<dbReference type="RefSeq" id="NP_231991.1">
    <property type="nucleotide sequence ID" value="NC_002505.1"/>
</dbReference>
<dbReference type="RefSeq" id="WP_000614136.1">
    <property type="nucleotide sequence ID" value="NZ_LT906614.1"/>
</dbReference>
<dbReference type="SMR" id="Q9KPK6"/>
<dbReference type="STRING" id="243277.VC_2361"/>
<dbReference type="DNASU" id="2613030"/>
<dbReference type="EnsemblBacteria" id="AAF95504">
    <property type="protein sequence ID" value="AAF95504"/>
    <property type="gene ID" value="VC_2361"/>
</dbReference>
<dbReference type="GeneID" id="89513655"/>
<dbReference type="KEGG" id="vch:VC_2361"/>
<dbReference type="PATRIC" id="fig|243277.26.peg.2248"/>
<dbReference type="eggNOG" id="COG3445">
    <property type="taxonomic scope" value="Bacteria"/>
</dbReference>
<dbReference type="HOGENOM" id="CLU_133780_0_0_6"/>
<dbReference type="Proteomes" id="UP000000584">
    <property type="component" value="Chromosome 1"/>
</dbReference>
<dbReference type="GO" id="GO:0003824">
    <property type="term" value="F:catalytic activity"/>
    <property type="evidence" value="ECO:0007669"/>
    <property type="project" value="InterPro"/>
</dbReference>
<dbReference type="FunFam" id="3.20.70.20:FF:000002">
    <property type="entry name" value="Autonomous glycyl radical cofactor"/>
    <property type="match status" value="1"/>
</dbReference>
<dbReference type="Gene3D" id="3.20.70.20">
    <property type="match status" value="1"/>
</dbReference>
<dbReference type="HAMAP" id="MF_00806">
    <property type="entry name" value="GrcA"/>
    <property type="match status" value="1"/>
</dbReference>
<dbReference type="InterPro" id="IPR050244">
    <property type="entry name" value="Auton_GlycylRad_Cofactor"/>
</dbReference>
<dbReference type="InterPro" id="IPR019777">
    <property type="entry name" value="Form_AcTrfase_GR_CS"/>
</dbReference>
<dbReference type="InterPro" id="IPR001150">
    <property type="entry name" value="Gly_radical"/>
</dbReference>
<dbReference type="InterPro" id="IPR011140">
    <property type="entry name" value="Glycyl_radical_cofactor_GrcA"/>
</dbReference>
<dbReference type="NCBIfam" id="TIGR04365">
    <property type="entry name" value="spare_glycyl"/>
    <property type="match status" value="1"/>
</dbReference>
<dbReference type="PANTHER" id="PTHR30191">
    <property type="entry name" value="FORMATE ACETYLTRANSFERASE"/>
    <property type="match status" value="1"/>
</dbReference>
<dbReference type="PANTHER" id="PTHR30191:SF0">
    <property type="entry name" value="FORMATE ACETYLTRANSFERASE 1"/>
    <property type="match status" value="1"/>
</dbReference>
<dbReference type="Pfam" id="PF01228">
    <property type="entry name" value="Gly_radical"/>
    <property type="match status" value="1"/>
</dbReference>
<dbReference type="PIRSF" id="PIRSF000378">
    <property type="entry name" value="Gly_radicl_yfiD"/>
    <property type="match status" value="1"/>
</dbReference>
<dbReference type="SUPFAM" id="SSF51998">
    <property type="entry name" value="PFL-like glycyl radical enzymes"/>
    <property type="match status" value="1"/>
</dbReference>
<dbReference type="PROSITE" id="PS00850">
    <property type="entry name" value="GLY_RADICAL_1"/>
    <property type="match status" value="1"/>
</dbReference>
<dbReference type="PROSITE" id="PS51149">
    <property type="entry name" value="GLY_RADICAL_2"/>
    <property type="match status" value="1"/>
</dbReference>
<evidence type="ECO:0000255" key="1">
    <source>
        <dbReference type="HAMAP-Rule" id="MF_00806"/>
    </source>
</evidence>
<keyword id="KW-0556">Organic radical</keyword>
<keyword id="KW-1185">Reference proteome</keyword>
<gene>
    <name evidence="1" type="primary">grcA</name>
    <name type="ordered locus">VC_2361</name>
</gene>
<accession>Q9KPK6</accession>
<protein>
    <recommendedName>
        <fullName evidence="1">Autonomous glycyl radical cofactor</fullName>
    </recommendedName>
</protein>
<reference key="1">
    <citation type="journal article" date="2000" name="Nature">
        <title>DNA sequence of both chromosomes of the cholera pathogen Vibrio cholerae.</title>
        <authorList>
            <person name="Heidelberg J.F."/>
            <person name="Eisen J.A."/>
            <person name="Nelson W.C."/>
            <person name="Clayton R.A."/>
            <person name="Gwinn M.L."/>
            <person name="Dodson R.J."/>
            <person name="Haft D.H."/>
            <person name="Hickey E.K."/>
            <person name="Peterson J.D."/>
            <person name="Umayam L.A."/>
            <person name="Gill S.R."/>
            <person name="Nelson K.E."/>
            <person name="Read T.D."/>
            <person name="Tettelin H."/>
            <person name="Richardson D.L."/>
            <person name="Ermolaeva M.D."/>
            <person name="Vamathevan J.J."/>
            <person name="Bass S."/>
            <person name="Qin H."/>
            <person name="Dragoi I."/>
            <person name="Sellers P."/>
            <person name="McDonald L.A."/>
            <person name="Utterback T.R."/>
            <person name="Fleischmann R.D."/>
            <person name="Nierman W.C."/>
            <person name="White O."/>
            <person name="Salzberg S.L."/>
            <person name="Smith H.O."/>
            <person name="Colwell R.R."/>
            <person name="Mekalanos J.J."/>
            <person name="Venter J.C."/>
            <person name="Fraser C.M."/>
        </authorList>
    </citation>
    <scope>NUCLEOTIDE SEQUENCE [LARGE SCALE GENOMIC DNA]</scope>
    <source>
        <strain>ATCC 39315 / El Tor Inaba N16961</strain>
    </source>
</reference>
<organism>
    <name type="scientific">Vibrio cholerae serotype O1 (strain ATCC 39315 / El Tor Inaba N16961)</name>
    <dbReference type="NCBI Taxonomy" id="243277"/>
    <lineage>
        <taxon>Bacteria</taxon>
        <taxon>Pseudomonadati</taxon>
        <taxon>Pseudomonadota</taxon>
        <taxon>Gammaproteobacteria</taxon>
        <taxon>Vibrionales</taxon>
        <taxon>Vibrionaceae</taxon>
        <taxon>Vibrio</taxon>
    </lineage>
</organism>